<keyword id="KW-0002">3D-structure</keyword>
<keyword id="KW-0025">Alternative splicing</keyword>
<keyword id="KW-0966">Cell projection</keyword>
<keyword id="KW-0963">Cytoplasm</keyword>
<keyword id="KW-0209">Deafness</keyword>
<keyword id="KW-1009">Hearing</keyword>
<keyword id="KW-1010">Non-syndromic deafness</keyword>
<keyword id="KW-0597">Phosphoprotein</keyword>
<keyword id="KW-1267">Proteomics identification</keyword>
<keyword id="KW-1185">Reference proteome</keyword>
<keyword id="KW-0677">Repeat</keyword>
<keyword id="KW-0682">Retinitis pigmentosa</keyword>
<keyword id="KW-0770">Synapse</keyword>
<keyword id="KW-0836">Usher syndrome</keyword>
<comment type="function">
    <text evidence="1">Involved in hearing and vision as member of the USH2 complex. Necessary for elongation and maintenance of inner and outer hair cell stereocilia in the organ of Corti in the inner ear. Involved in the maintenance of the hair bundle ankle region, which connects stereocilia in cochlear hair cells of the inner ear. In retina photoreceptors, required for the maintenance of periciliary membrane complex that seems to play a role in regulating intracellular protein transport.</text>
</comment>
<comment type="subunit">
    <text evidence="1 2 10 12 13">Forms homooligomers (By similarity). Interacts (via C-terminal PDZ domain) with MYO15A; this interaction is necessary for localization of WHRN to stereocilia tips (By similarity). Interacts (via C-terminal PDZ domain) with MPP1/p55 (PubMed:17584769). Interacts with LRRC4C/NGL1. Interacts with MYO7A. Interacts with RPGR. Interacts with EPS8 (By similarity). Interacts with CASK (By similarity). Interacts with CIB2 (PubMed:23023331). Component of USH2 complex, composed of ADGRV1, PDZD7, USH2A and WHRN. Interacts (via PDZ domains) with PDZD7; the interaction is direct. Interacts (via N-terminal PDZ domain) with USH2A (via cytoplasmic region) (PubMed:16434480). Interacts with ADGRV1/MASS1 (via cytoplasmic region) (PubMed:16434480).</text>
</comment>
<comment type="interaction">
    <interactant intactId="EBI-310886">
        <id>Q9P202</id>
    </interactant>
    <interactant intactId="EBI-10181188">
        <id>Q8N7W2-2</id>
        <label>BEND7</label>
    </interactant>
    <organismsDiffer>false</organismsDiffer>
    <experiments>3</experiments>
</comment>
<comment type="interaction">
    <interactant intactId="EBI-310886">
        <id>Q9P202</id>
    </interactant>
    <interactant intactId="EBI-2341576">
        <id>P35226</id>
        <label>BMI1</label>
    </interactant>
    <organismsDiffer>false</organismsDiffer>
    <experiments>3</experiments>
</comment>
<comment type="interaction">
    <interactant intactId="EBI-310886">
        <id>Q9P202</id>
    </interactant>
    <interactant intactId="EBI-2528742">
        <id>Q9UMD9</id>
        <label>COL17A1</label>
    </interactant>
    <organismsDiffer>false</organismsDiffer>
    <experiments>3</experiments>
</comment>
<comment type="interaction">
    <interactant intactId="EBI-310886">
        <id>Q9P202</id>
    </interactant>
    <interactant intactId="EBI-742054">
        <id>Q96D03</id>
        <label>DDIT4L</label>
    </interactant>
    <organismsDiffer>false</organismsDiffer>
    <experiments>3</experiments>
</comment>
<comment type="interaction">
    <interactant intactId="EBI-310886">
        <id>Q9P202</id>
    </interactant>
    <interactant intactId="EBI-743105">
        <id>Q5JVL4</id>
        <label>EFHC1</label>
    </interactant>
    <organismsDiffer>false</organismsDiffer>
    <experiments>3</experiments>
</comment>
<comment type="interaction">
    <interactant intactId="EBI-310886">
        <id>Q9P202</id>
    </interactant>
    <interactant intactId="EBI-618309">
        <id>Q08379</id>
        <label>GOLGA2</label>
    </interactant>
    <organismsDiffer>false</organismsDiffer>
    <experiments>3</experiments>
</comment>
<comment type="interaction">
    <interactant intactId="EBI-310886">
        <id>Q9P202</id>
    </interactant>
    <interactant intactId="EBI-618655">
        <id>P81274</id>
        <label>GPSM2</label>
    </interactant>
    <organismsDiffer>false</organismsDiffer>
    <experiments>3</experiments>
</comment>
<comment type="interaction">
    <interactant intactId="EBI-310886">
        <id>Q9P202</id>
    </interactant>
    <interactant intactId="EBI-751001">
        <id>Q14145</id>
        <label>KEAP1</label>
    </interactant>
    <organismsDiffer>false</organismsDiffer>
    <experiments>3</experiments>
</comment>
<comment type="interaction">
    <interactant intactId="EBI-310886">
        <id>Q9P202</id>
    </interactant>
    <interactant intactId="EBI-11954250">
        <id>P49023-2</id>
        <label>PXN</label>
    </interactant>
    <organismsDiffer>false</organismsDiffer>
    <experiments>3</experiments>
</comment>
<comment type="interaction">
    <interactant intactId="EBI-310886">
        <id>Q9P202</id>
    </interactant>
    <interactant intactId="EBI-999900">
        <id>Q8NBT2</id>
        <label>SPC24</label>
    </interactant>
    <organismsDiffer>false</organismsDiffer>
    <experiments>3</experiments>
</comment>
<comment type="interaction">
    <interactant intactId="EBI-310886">
        <id>Q9P202</id>
    </interactant>
    <interactant intactId="EBI-11978969">
        <id>Q4KMQ1-2</id>
        <label>TPRN</label>
    </interactant>
    <organismsDiffer>false</organismsDiffer>
    <experiments>7</experiments>
</comment>
<comment type="subcellular location">
    <subcellularLocation>
        <location evidence="1">Cytoplasm</location>
    </subcellularLocation>
    <subcellularLocation>
        <location evidence="1">Cell projection</location>
        <location evidence="1">Stereocilium</location>
    </subcellularLocation>
    <subcellularLocation>
        <location evidence="1">Cell projection</location>
        <location evidence="1">Growth cone</location>
    </subcellularLocation>
    <subcellularLocation>
        <location evidence="1">Photoreceptor inner segment</location>
    </subcellularLocation>
    <subcellularLocation>
        <location evidence="2">Synapse</location>
    </subcellularLocation>
    <text evidence="1 2 12">Detected at the level of stereocilia in inner and outer hair cells of the cochlea and vestibule. Localizes to both tip and ankle-link stereocilia regions. Colocalizes with the growing ends of actin filaments. Colocalizes with MPP1 in the retina, at the outer limiting membrane (OLM), outer plexifirm layer (OPL), basal bodies and at the connecting cilium (CC). In photoreceptors, localizes at a plasma membrane microdomain in the apical inner segment that surrounds the connecting cilia called periciliary membrane complex.</text>
</comment>
<comment type="alternative products">
    <event type="alternative splicing"/>
    <isoform>
        <id>Q9P202-1</id>
        <name>1</name>
        <sequence type="displayed"/>
    </isoform>
    <isoform>
        <id>Q9P202-2</id>
        <name>2</name>
        <sequence type="described" ref="VSP_012218 VSP_012219"/>
    </isoform>
    <isoform>
        <id>Q9P202-3</id>
        <name>3</name>
        <sequence type="described" ref="VSP_012216"/>
    </isoform>
    <isoform>
        <id>Q9P202-4</id>
        <name>4</name>
        <sequence type="described" ref="VSP_012217 VSP_012220"/>
    </isoform>
</comment>
<comment type="disease" evidence="5 6 9">
    <disease id="DI-00871">
        <name>Deafness, autosomal recessive, 31</name>
        <acronym>DFNB31</acronym>
        <description>A form of non-syndromic sensorineural hearing loss. Sensorineural deafness results from damage to the neural receptors of the inner ear, the nerve pathways to the brain, or the area of the brain that receives sound information.</description>
        <dbReference type="MIM" id="607084"/>
    </disease>
    <text>The disease is caused by variants affecting the gene represented in this entry.</text>
</comment>
<comment type="disease" evidence="11">
    <disease id="DI-02406">
        <name>Usher syndrome 2D</name>
        <acronym>USH2D</acronym>
        <description>USH is a genetically heterogeneous condition characterized by the association of retinitis pigmentosa and sensorineural deafness. Age at onset and differences in auditory and vestibular function distinguish Usher syndrome type 1 (USH1), Usher syndrome type 2 (USH2) and Usher syndrome type 3 (USH3). USH2 is characterized by congenital mild hearing impairment with normal vestibular responses.</description>
        <dbReference type="MIM" id="611383"/>
    </disease>
    <text>The disease is caused by variants affecting the gene represented in this entry.</text>
</comment>
<comment type="miscellaneous">
    <molecule>Isoform 2</molecule>
    <text evidence="17">May be due to an intron retention.</text>
</comment>
<comment type="sequence caution" evidence="17">
    <conflict type="erroneous initiation">
        <sequence resource="EMBL-CDS" id="BAA96050"/>
    </conflict>
    <text>Extended N-terminus.</text>
</comment>
<comment type="online information" name="Hereditary hearing loss homepage">
    <link uri="https://hereditaryhearingloss.org/recessive"/>
    <text>Gene page</text>
</comment>
<sequence>MNAPLDGLSVSSSSTGSLGSAAGAGGGGGAGLRLLSANVRQLHQALTALLSEAEREQFTHCLNAYHARRNVFDLVRTLRVLLDSPVKRRLLPMLRLVIPRSDQLLFDQYTAEGLYLPATTPYRQPAWGGPDSAGPGEVRLVSLRRAKAHEGLGFSIRGGSEHGVGIYVSLVEPGSLAEKEGLRVGDQILRVNDKSLARVTHAEAVKALKGSKKLVLSVYSAGRIPGGYVTNHIYTWVDPQGRSISPPSGLPQPHGGALRQQEGDRRSTLHLLQGGDEKKVNLVLGDGRSLGLTIRGGAEYGLGIYITGVDPGSEAEGSGLKVGDQILEVNGRSFLNILHDEAVRLLKSSRHLILTVKDVGRLPHARTTVDETKWIASSRIRETMANSAGFLGDLTTEGINKPGFYKGPAGSQVTLSSLGNQTRVLLEEQARHLLNEQEHATMAYYLDEYRGGSVSVEALVMALFKLLNTHAKFSLLSEVRGTISPQDLERFDHLVLRREIESMKARQPPGPGAGDTYSMVSYSDTGSSTGSHGTSTTVSSARNTLDLEETGEAVQGNINALPDVSVDDVRSTSQGLSSFKPLPRPPPLAQGNDLPLGQPRKLGREDLQPPSSMPSCSGTVFSAPQNRSPPAGTAPTPGTSSAQDLPSSPIYASVSPANPSSKRPLDAHLALVNQHPIGPFPRVQSPPHLKSPSAEATVAGGCLLPPSPSGHPDQTGTNQHFVMVEVHRPDSEPDVNEVRALPQTRTASTLSQLSDSGQTLSEDSGVDAGEAEASAPGRGRQSVSTKSRSSKELPRNERPTDGANKPPGLLEPTSTLVRVKKSAATLGIAIEGGANTRQPLPRIVTIQRGGSAHNCGQLKVGHVILEVNGLTLRGKEHREAARIIAEAFKTKDRDYIDFLVTEFNVML</sequence>
<gene>
    <name evidence="18" type="primary">WHRN</name>
    <name evidence="14" type="synonym">DFNB31</name>
    <name type="synonym">KIAA1526</name>
</gene>
<reference key="1">
    <citation type="journal article" date="2000" name="DNA Res.">
        <title>Prediction of the coding sequences of unidentified human genes. XVII. The complete sequences of 100 new cDNA clones from brain which code for large proteins in vitro.</title>
        <authorList>
            <person name="Nagase T."/>
            <person name="Kikuno R."/>
            <person name="Ishikawa K."/>
            <person name="Hirosawa M."/>
            <person name="Ohara O."/>
        </authorList>
    </citation>
    <scope>NUCLEOTIDE SEQUENCE [LARGE SCALE MRNA] (ISOFORM 1)</scope>
    <source>
        <tissue>Brain</tissue>
    </source>
</reference>
<reference key="2">
    <citation type="journal article" date="2004" name="Nat. Genet.">
        <title>Complete sequencing and characterization of 21,243 full-length human cDNAs.</title>
        <authorList>
            <person name="Ota T."/>
            <person name="Suzuki Y."/>
            <person name="Nishikawa T."/>
            <person name="Otsuki T."/>
            <person name="Sugiyama T."/>
            <person name="Irie R."/>
            <person name="Wakamatsu A."/>
            <person name="Hayashi K."/>
            <person name="Sato H."/>
            <person name="Nagai K."/>
            <person name="Kimura K."/>
            <person name="Makita H."/>
            <person name="Sekine M."/>
            <person name="Obayashi M."/>
            <person name="Nishi T."/>
            <person name="Shibahara T."/>
            <person name="Tanaka T."/>
            <person name="Ishii S."/>
            <person name="Yamamoto J."/>
            <person name="Saito K."/>
            <person name="Kawai Y."/>
            <person name="Isono Y."/>
            <person name="Nakamura Y."/>
            <person name="Nagahari K."/>
            <person name="Murakami K."/>
            <person name="Yasuda T."/>
            <person name="Iwayanagi T."/>
            <person name="Wagatsuma M."/>
            <person name="Shiratori A."/>
            <person name="Sudo H."/>
            <person name="Hosoiri T."/>
            <person name="Kaku Y."/>
            <person name="Kodaira H."/>
            <person name="Kondo H."/>
            <person name="Sugawara M."/>
            <person name="Takahashi M."/>
            <person name="Kanda K."/>
            <person name="Yokoi T."/>
            <person name="Furuya T."/>
            <person name="Kikkawa E."/>
            <person name="Omura Y."/>
            <person name="Abe K."/>
            <person name="Kamihara K."/>
            <person name="Katsuta N."/>
            <person name="Sato K."/>
            <person name="Tanikawa M."/>
            <person name="Yamazaki M."/>
            <person name="Ninomiya K."/>
            <person name="Ishibashi T."/>
            <person name="Yamashita H."/>
            <person name="Murakawa K."/>
            <person name="Fujimori K."/>
            <person name="Tanai H."/>
            <person name="Kimata M."/>
            <person name="Watanabe M."/>
            <person name="Hiraoka S."/>
            <person name="Chiba Y."/>
            <person name="Ishida S."/>
            <person name="Ono Y."/>
            <person name="Takiguchi S."/>
            <person name="Watanabe S."/>
            <person name="Yosida M."/>
            <person name="Hotuta T."/>
            <person name="Kusano J."/>
            <person name="Kanehori K."/>
            <person name="Takahashi-Fujii A."/>
            <person name="Hara H."/>
            <person name="Tanase T.-O."/>
            <person name="Nomura Y."/>
            <person name="Togiya S."/>
            <person name="Komai F."/>
            <person name="Hara R."/>
            <person name="Takeuchi K."/>
            <person name="Arita M."/>
            <person name="Imose N."/>
            <person name="Musashino K."/>
            <person name="Yuuki H."/>
            <person name="Oshima A."/>
            <person name="Sasaki N."/>
            <person name="Aotsuka S."/>
            <person name="Yoshikawa Y."/>
            <person name="Matsunawa H."/>
            <person name="Ichihara T."/>
            <person name="Shiohata N."/>
            <person name="Sano S."/>
            <person name="Moriya S."/>
            <person name="Momiyama H."/>
            <person name="Satoh N."/>
            <person name="Takami S."/>
            <person name="Terashima Y."/>
            <person name="Suzuki O."/>
            <person name="Nakagawa S."/>
            <person name="Senoh A."/>
            <person name="Mizoguchi H."/>
            <person name="Goto Y."/>
            <person name="Shimizu F."/>
            <person name="Wakebe H."/>
            <person name="Hishigaki H."/>
            <person name="Watanabe T."/>
            <person name="Sugiyama A."/>
            <person name="Takemoto M."/>
            <person name="Kawakami B."/>
            <person name="Yamazaki M."/>
            <person name="Watanabe K."/>
            <person name="Kumagai A."/>
            <person name="Itakura S."/>
            <person name="Fukuzumi Y."/>
            <person name="Fujimori Y."/>
            <person name="Komiyama M."/>
            <person name="Tashiro H."/>
            <person name="Tanigami A."/>
            <person name="Fujiwara T."/>
            <person name="Ono T."/>
            <person name="Yamada K."/>
            <person name="Fujii Y."/>
            <person name="Ozaki K."/>
            <person name="Hirao M."/>
            <person name="Ohmori Y."/>
            <person name="Kawabata A."/>
            <person name="Hikiji T."/>
            <person name="Kobatake N."/>
            <person name="Inagaki H."/>
            <person name="Ikema Y."/>
            <person name="Okamoto S."/>
            <person name="Okitani R."/>
            <person name="Kawakami T."/>
            <person name="Noguchi S."/>
            <person name="Itoh T."/>
            <person name="Shigeta K."/>
            <person name="Senba T."/>
            <person name="Matsumura K."/>
            <person name="Nakajima Y."/>
            <person name="Mizuno T."/>
            <person name="Morinaga M."/>
            <person name="Sasaki M."/>
            <person name="Togashi T."/>
            <person name="Oyama M."/>
            <person name="Hata H."/>
            <person name="Watanabe M."/>
            <person name="Komatsu T."/>
            <person name="Mizushima-Sugano J."/>
            <person name="Satoh T."/>
            <person name="Shirai Y."/>
            <person name="Takahashi Y."/>
            <person name="Nakagawa K."/>
            <person name="Okumura K."/>
            <person name="Nagase T."/>
            <person name="Nomura N."/>
            <person name="Kikuchi H."/>
            <person name="Masuho Y."/>
            <person name="Yamashita R."/>
            <person name="Nakai K."/>
            <person name="Yada T."/>
            <person name="Nakamura Y."/>
            <person name="Ohara O."/>
            <person name="Isogai T."/>
            <person name="Sugano S."/>
        </authorList>
    </citation>
    <scope>NUCLEOTIDE SEQUENCE [LARGE SCALE MRNA] (ISOFORMS 2 AND 4)</scope>
    <scope>VARIANTS THR-613 AND ALA-783</scope>
</reference>
<reference key="3">
    <citation type="journal article" date="2007" name="BMC Genomics">
        <title>The full-ORF clone resource of the German cDNA consortium.</title>
        <authorList>
            <person name="Bechtel S."/>
            <person name="Rosenfelder H."/>
            <person name="Duda A."/>
            <person name="Schmidt C.P."/>
            <person name="Ernst U."/>
            <person name="Wellenreuther R."/>
            <person name="Mehrle A."/>
            <person name="Schuster C."/>
            <person name="Bahr A."/>
            <person name="Bloecker H."/>
            <person name="Heubner D."/>
            <person name="Hoerlein A."/>
            <person name="Michel G."/>
            <person name="Wedler H."/>
            <person name="Koehrer K."/>
            <person name="Ottenwaelder B."/>
            <person name="Poustka A."/>
            <person name="Wiemann S."/>
            <person name="Schupp I."/>
        </authorList>
    </citation>
    <scope>NUCLEOTIDE SEQUENCE [LARGE SCALE MRNA] (ISOFORM 3)</scope>
    <source>
        <tissue>Testis</tissue>
    </source>
</reference>
<reference key="4">
    <citation type="journal article" date="2004" name="Nature">
        <title>DNA sequence and analysis of human chromosome 9.</title>
        <authorList>
            <person name="Humphray S.J."/>
            <person name="Oliver K."/>
            <person name="Hunt A.R."/>
            <person name="Plumb R.W."/>
            <person name="Loveland J.E."/>
            <person name="Howe K.L."/>
            <person name="Andrews T.D."/>
            <person name="Searle S."/>
            <person name="Hunt S.E."/>
            <person name="Scott C.E."/>
            <person name="Jones M.C."/>
            <person name="Ainscough R."/>
            <person name="Almeida J.P."/>
            <person name="Ambrose K.D."/>
            <person name="Ashwell R.I.S."/>
            <person name="Babbage A.K."/>
            <person name="Babbage S."/>
            <person name="Bagguley C.L."/>
            <person name="Bailey J."/>
            <person name="Banerjee R."/>
            <person name="Barker D.J."/>
            <person name="Barlow K.F."/>
            <person name="Bates K."/>
            <person name="Beasley H."/>
            <person name="Beasley O."/>
            <person name="Bird C.P."/>
            <person name="Bray-Allen S."/>
            <person name="Brown A.J."/>
            <person name="Brown J.Y."/>
            <person name="Burford D."/>
            <person name="Burrill W."/>
            <person name="Burton J."/>
            <person name="Carder C."/>
            <person name="Carter N.P."/>
            <person name="Chapman J.C."/>
            <person name="Chen Y."/>
            <person name="Clarke G."/>
            <person name="Clark S.Y."/>
            <person name="Clee C.M."/>
            <person name="Clegg S."/>
            <person name="Collier R.E."/>
            <person name="Corby N."/>
            <person name="Crosier M."/>
            <person name="Cummings A.T."/>
            <person name="Davies J."/>
            <person name="Dhami P."/>
            <person name="Dunn M."/>
            <person name="Dutta I."/>
            <person name="Dyer L.W."/>
            <person name="Earthrowl M.E."/>
            <person name="Faulkner L."/>
            <person name="Fleming C.J."/>
            <person name="Frankish A."/>
            <person name="Frankland J.A."/>
            <person name="French L."/>
            <person name="Fricker D.G."/>
            <person name="Garner P."/>
            <person name="Garnett J."/>
            <person name="Ghori J."/>
            <person name="Gilbert J.G.R."/>
            <person name="Glison C."/>
            <person name="Grafham D.V."/>
            <person name="Gribble S."/>
            <person name="Griffiths C."/>
            <person name="Griffiths-Jones S."/>
            <person name="Grocock R."/>
            <person name="Guy J."/>
            <person name="Hall R.E."/>
            <person name="Hammond S."/>
            <person name="Harley J.L."/>
            <person name="Harrison E.S.I."/>
            <person name="Hart E.A."/>
            <person name="Heath P.D."/>
            <person name="Henderson C.D."/>
            <person name="Hopkins B.L."/>
            <person name="Howard P.J."/>
            <person name="Howden P.J."/>
            <person name="Huckle E."/>
            <person name="Johnson C."/>
            <person name="Johnson D."/>
            <person name="Joy A.A."/>
            <person name="Kay M."/>
            <person name="Keenan S."/>
            <person name="Kershaw J.K."/>
            <person name="Kimberley A.M."/>
            <person name="King A."/>
            <person name="Knights A."/>
            <person name="Laird G.K."/>
            <person name="Langford C."/>
            <person name="Lawlor S."/>
            <person name="Leongamornlert D.A."/>
            <person name="Leversha M."/>
            <person name="Lloyd C."/>
            <person name="Lloyd D.M."/>
            <person name="Lovell J."/>
            <person name="Martin S."/>
            <person name="Mashreghi-Mohammadi M."/>
            <person name="Matthews L."/>
            <person name="McLaren S."/>
            <person name="McLay K.E."/>
            <person name="McMurray A."/>
            <person name="Milne S."/>
            <person name="Nickerson T."/>
            <person name="Nisbett J."/>
            <person name="Nordsiek G."/>
            <person name="Pearce A.V."/>
            <person name="Peck A.I."/>
            <person name="Porter K.M."/>
            <person name="Pandian R."/>
            <person name="Pelan S."/>
            <person name="Phillimore B."/>
            <person name="Povey S."/>
            <person name="Ramsey Y."/>
            <person name="Rand V."/>
            <person name="Scharfe M."/>
            <person name="Sehra H.K."/>
            <person name="Shownkeen R."/>
            <person name="Sims S.K."/>
            <person name="Skuce C.D."/>
            <person name="Smith M."/>
            <person name="Steward C.A."/>
            <person name="Swarbreck D."/>
            <person name="Sycamore N."/>
            <person name="Tester J."/>
            <person name="Thorpe A."/>
            <person name="Tracey A."/>
            <person name="Tromans A."/>
            <person name="Thomas D.W."/>
            <person name="Wall M."/>
            <person name="Wallis J.M."/>
            <person name="West A.P."/>
            <person name="Whitehead S.L."/>
            <person name="Willey D.L."/>
            <person name="Williams S.A."/>
            <person name="Wilming L."/>
            <person name="Wray P.W."/>
            <person name="Young L."/>
            <person name="Ashurst J.L."/>
            <person name="Coulson A."/>
            <person name="Blocker H."/>
            <person name="Durbin R.M."/>
            <person name="Sulston J.E."/>
            <person name="Hubbard T."/>
            <person name="Jackson M.J."/>
            <person name="Bentley D.R."/>
            <person name="Beck S."/>
            <person name="Rogers J."/>
            <person name="Dunham I."/>
        </authorList>
    </citation>
    <scope>NUCLEOTIDE SEQUENCE [LARGE SCALE GENOMIC DNA]</scope>
</reference>
<reference key="5">
    <citation type="submission" date="2005-07" db="EMBL/GenBank/DDBJ databases">
        <authorList>
            <person name="Mural R.J."/>
            <person name="Istrail S."/>
            <person name="Sutton G.G."/>
            <person name="Florea L."/>
            <person name="Halpern A.L."/>
            <person name="Mobarry C.M."/>
            <person name="Lippert R."/>
            <person name="Walenz B."/>
            <person name="Shatkay H."/>
            <person name="Dew I."/>
            <person name="Miller J.R."/>
            <person name="Flanigan M.J."/>
            <person name="Edwards N.J."/>
            <person name="Bolanos R."/>
            <person name="Fasulo D."/>
            <person name="Halldorsson B.V."/>
            <person name="Hannenhalli S."/>
            <person name="Turner R."/>
            <person name="Yooseph S."/>
            <person name="Lu F."/>
            <person name="Nusskern D.R."/>
            <person name="Shue B.C."/>
            <person name="Zheng X.H."/>
            <person name="Zhong F."/>
            <person name="Delcher A.L."/>
            <person name="Huson D.H."/>
            <person name="Kravitz S.A."/>
            <person name="Mouchard L."/>
            <person name="Reinert K."/>
            <person name="Remington K.A."/>
            <person name="Clark A.G."/>
            <person name="Waterman M.S."/>
            <person name="Eichler E.E."/>
            <person name="Adams M.D."/>
            <person name="Hunkapiller M.W."/>
            <person name="Myers E.W."/>
            <person name="Venter J.C."/>
        </authorList>
    </citation>
    <scope>NUCLEOTIDE SEQUENCE [LARGE SCALE GENOMIC DNA]</scope>
</reference>
<reference key="6">
    <citation type="journal article" date="2004" name="Genome Res.">
        <title>The status, quality, and expansion of the NIH full-length cDNA project: the Mammalian Gene Collection (MGC).</title>
        <authorList>
            <consortium name="The MGC Project Team"/>
        </authorList>
    </citation>
    <scope>NUCLEOTIDE SEQUENCE [LARGE SCALE MRNA] (ISOFORM 1)</scope>
    <scope>VARIANTS THR-613 AND ALA-783</scope>
</reference>
<reference key="7">
    <citation type="journal article" date="2002" name="Eur. J. Hum. Genet.">
        <title>DFNB31, a recessive form of sensorineural hearing loss, maps to chromosome 9q32-34.</title>
        <authorList>
            <person name="Mustapha M."/>
            <person name="Chouery E."/>
            <person name="Chardenoux S."/>
            <person name="Naboulsi M."/>
            <person name="Paronnaud J."/>
            <person name="Lemainque A."/>
            <person name="Megarbane A."/>
            <person name="Loiselet J."/>
            <person name="Weil D."/>
            <person name="Lathrop M."/>
            <person name="Petit C."/>
        </authorList>
    </citation>
    <scope>INVOLVEMENT IN DFNB31</scope>
</reference>
<reference key="8">
    <citation type="journal article" date="2003" name="Nat. Genet.">
        <title>Defects in whirlin, a PDZ domain molecule involved in stereocilia elongation, cause deafness in the whirler mouse and families with DFNB31.</title>
        <authorList>
            <person name="Mburu P."/>
            <person name="Mustapha M."/>
            <person name="Varela A."/>
            <person name="Weil D."/>
            <person name="El-Amraoui A."/>
            <person name="Holme R.H."/>
            <person name="Rump A."/>
            <person name="Hardisty R.E."/>
            <person name="Blanchard S."/>
            <person name="Coimbra R.S."/>
            <person name="Perfettini I."/>
            <person name="Parkinson N."/>
            <person name="Mallon A.-M."/>
            <person name="Glenister P."/>
            <person name="Rogers M.J."/>
            <person name="Paige A.J."/>
            <person name="Moir L."/>
            <person name="Clay J."/>
            <person name="Rosenthal A."/>
            <person name="Liu X.Z."/>
            <person name="Blanco G."/>
            <person name="Steel K.P."/>
            <person name="Petit C."/>
            <person name="Brown S.D."/>
        </authorList>
    </citation>
    <scope>INVOLVEMENT IN DFNB31</scope>
    <scope>ALTERNATIVE SPLICING</scope>
</reference>
<reference key="9">
    <citation type="journal article" date="2005" name="Hum. Mutat.">
        <title>Identification of a novel frameshift mutation in the DFNB31/WHRN gene in a Tunisian consanguineous family with hereditary non-syndromic recessive hearing loss.</title>
        <authorList>
            <person name="Tlili A."/>
            <person name="Charfedine I."/>
            <person name="Lahmar I."/>
            <person name="Benzina Z."/>
            <person name="Mohamed B.A."/>
            <person name="Weil D."/>
            <person name="Idriss N."/>
            <person name="Drira M."/>
            <person name="Masmoudi S."/>
            <person name="Ayadi H."/>
        </authorList>
    </citation>
    <scope>INVOLVEMENT IN DFNB31</scope>
</reference>
<reference key="10">
    <citation type="journal article" date="2006" name="Hum. Mol. Genet.">
        <title>The DFNB31 gene product whirlin connects to the Usher protein network in the cochlea and retina by direct association with USH2A and VLGR1.</title>
        <authorList>
            <person name="van Wijk E."/>
            <person name="van der Zwaag B."/>
            <person name="Peters T."/>
            <person name="Zimmermann U."/>
            <person name="Te Brinke H."/>
            <person name="Kersten F.F.J."/>
            <person name="Maerker T."/>
            <person name="Aller E."/>
            <person name="Hoefsloot L.H."/>
            <person name="Cremers C.W.R.J."/>
            <person name="Cremers F.P.M."/>
            <person name="Wolfrum U."/>
            <person name="Knipper M."/>
            <person name="Roepman R."/>
            <person name="Kremer H."/>
        </authorList>
    </citation>
    <scope>INTERACTION WITH USH2A AND ADGRV1</scope>
</reference>
<reference key="11">
    <citation type="journal article" date="2007" name="Hum. Genet.">
        <title>A novel gene for Usher syndrome type 2: mutations in the long isoform of whirlin are associated with retinitis pigmentosa and sensorineural hearing loss.</title>
        <authorList>
            <person name="Ebermann I."/>
            <person name="Scholl H.P.N."/>
            <person name="Charbel Issa P."/>
            <person name="Becirovic E."/>
            <person name="Lamprecht J."/>
            <person name="Jurklies B."/>
            <person name="Millan J.M."/>
            <person name="Aller E."/>
            <person name="Mitter D."/>
            <person name="Bolz H."/>
        </authorList>
    </citation>
    <scope>INVOLVEMENT IN USH2D</scope>
</reference>
<reference key="12">
    <citation type="journal article" date="2007" name="Hum. Mol. Genet.">
        <title>MPP1 links the Usher protein network and the Crumbs protein complex in the retina.</title>
        <authorList>
            <person name="Gosens I."/>
            <person name="van Wijk E."/>
            <person name="Kersten F.F."/>
            <person name="Krieger E."/>
            <person name="van der Zwaag B."/>
            <person name="Maerker T."/>
            <person name="Letteboer S.J."/>
            <person name="Dusseljee S."/>
            <person name="Peters T."/>
            <person name="Spierenburg H.A."/>
            <person name="Punte I.M."/>
            <person name="Wolfrum U."/>
            <person name="Cremers F.P.M."/>
            <person name="Kremer H."/>
            <person name="Roepman R."/>
        </authorList>
    </citation>
    <scope>INTERACTION WITH MPP1</scope>
    <scope>SUBCELLULAR LOCATION</scope>
</reference>
<reference key="13">
    <citation type="journal article" date="2012" name="Nat. Genet.">
        <title>Alterations of the CIB2 calcium- and integrin-binding protein cause Usher syndrome type 1J and nonsyndromic deafness DFNB48.</title>
        <authorList>
            <person name="Riazuddin S."/>
            <person name="Belyantseva I.A."/>
            <person name="Giese A.P."/>
            <person name="Lee K."/>
            <person name="Indzhykulian A.A."/>
            <person name="Nandamuri S.P."/>
            <person name="Yousaf R."/>
            <person name="Sinha G.P."/>
            <person name="Lee S."/>
            <person name="Terrell D."/>
            <person name="Hegde R.S."/>
            <person name="Ali R.A."/>
            <person name="Anwar S."/>
            <person name="Andrade-Elizondo P.B."/>
            <person name="Sirmaci A."/>
            <person name="Parise L.V."/>
            <person name="Basit S."/>
            <person name="Wali A."/>
            <person name="Ayub M."/>
            <person name="Ansar M."/>
            <person name="Ahmad W."/>
            <person name="Khan S.N."/>
            <person name="Akram J."/>
            <person name="Tekin M."/>
            <person name="Riazuddin S."/>
            <person name="Cook T."/>
            <person name="Buschbeck E.K."/>
            <person name="Frolenkov G.I."/>
            <person name="Leal S.M."/>
            <person name="Friedman T.B."/>
            <person name="Ahmed Z.M."/>
        </authorList>
    </citation>
    <scope>INTERACTION WITH CIB2</scope>
</reference>
<reference key="14">
    <citation type="journal article" date="2013" name="J. Proteome Res.">
        <title>Toward a comprehensive characterization of a human cancer cell phosphoproteome.</title>
        <authorList>
            <person name="Zhou H."/>
            <person name="Di Palma S."/>
            <person name="Preisinger C."/>
            <person name="Peng M."/>
            <person name="Polat A.N."/>
            <person name="Heck A.J."/>
            <person name="Mohammed S."/>
        </authorList>
    </citation>
    <scope>PHOSPHORYLATION [LARGE SCALE ANALYSIS] AT SER-685</scope>
    <scope>IDENTIFICATION BY MASS SPECTROMETRY [LARGE SCALE ANALYSIS]</scope>
    <source>
        <tissue>Erythroleukemia</tissue>
    </source>
</reference>
<reference key="15">
    <citation type="submission" date="2003-12" db="PDB data bank">
        <title>Solution structure of PDZ domains of human KIAA1526 protein.</title>
        <authorList>
            <consortium name="RIKEN structural genomics initiative (RSGI)"/>
        </authorList>
    </citation>
    <scope>STRUCTURE BY NMR OF 136-378 AND 815-904</scope>
</reference>
<dbReference type="EMBL" id="AB040959">
    <property type="protein sequence ID" value="BAA96050.1"/>
    <property type="status" value="ALT_INIT"/>
    <property type="molecule type" value="mRNA"/>
</dbReference>
<dbReference type="EMBL" id="AK022854">
    <property type="protein sequence ID" value="BAB14275.1"/>
    <property type="molecule type" value="mRNA"/>
</dbReference>
<dbReference type="EMBL" id="AK056190">
    <property type="status" value="NOT_ANNOTATED_CDS"/>
    <property type="molecule type" value="mRNA"/>
</dbReference>
<dbReference type="EMBL" id="AL110228">
    <property type="protein sequence ID" value="CAB53685.2"/>
    <property type="molecule type" value="mRNA"/>
</dbReference>
<dbReference type="EMBL" id="AL138895">
    <property type="status" value="NOT_ANNOTATED_CDS"/>
    <property type="molecule type" value="Genomic_DNA"/>
</dbReference>
<dbReference type="EMBL" id="KF459656">
    <property type="status" value="NOT_ANNOTATED_CDS"/>
    <property type="molecule type" value="Genomic_DNA"/>
</dbReference>
<dbReference type="EMBL" id="KF459658">
    <property type="status" value="NOT_ANNOTATED_CDS"/>
    <property type="molecule type" value="Genomic_DNA"/>
</dbReference>
<dbReference type="EMBL" id="CH471090">
    <property type="protein sequence ID" value="EAW87422.1"/>
    <property type="molecule type" value="Genomic_DNA"/>
</dbReference>
<dbReference type="EMBL" id="CH471090">
    <property type="protein sequence ID" value="EAW87423.1"/>
    <property type="molecule type" value="Genomic_DNA"/>
</dbReference>
<dbReference type="EMBL" id="BC142614">
    <property type="protein sequence ID" value="AAI42615.1"/>
    <property type="molecule type" value="mRNA"/>
</dbReference>
<dbReference type="EMBL" id="BC142684">
    <property type="protein sequence ID" value="AAI42685.1"/>
    <property type="molecule type" value="mRNA"/>
</dbReference>
<dbReference type="CCDS" id="CCDS43870.1">
    <molecule id="Q9P202-3"/>
</dbReference>
<dbReference type="CCDS" id="CCDS6806.1">
    <molecule id="Q9P202-1"/>
</dbReference>
<dbReference type="PIR" id="T14765">
    <property type="entry name" value="T14765"/>
</dbReference>
<dbReference type="RefSeq" id="NP_001077354.2">
    <molecule id="Q9P202-3"/>
    <property type="nucleotide sequence ID" value="NM_001083885.3"/>
</dbReference>
<dbReference type="RefSeq" id="NP_001166896.1">
    <property type="nucleotide sequence ID" value="NM_001173425.1"/>
</dbReference>
<dbReference type="RefSeq" id="NP_001333819.1">
    <molecule id="Q9P202-4"/>
    <property type="nucleotide sequence ID" value="NM_001346890.1"/>
</dbReference>
<dbReference type="RefSeq" id="NP_056219.3">
    <molecule id="Q9P202-1"/>
    <property type="nucleotide sequence ID" value="NM_015404.4"/>
</dbReference>
<dbReference type="RefSeq" id="XP_047279117.1">
    <molecule id="Q9P202-1"/>
    <property type="nucleotide sequence ID" value="XM_047423161.1"/>
</dbReference>
<dbReference type="PDB" id="1UEZ">
    <property type="method" value="NMR"/>
    <property type="chains" value="A=137-224"/>
</dbReference>
<dbReference type="PDB" id="1UF1">
    <property type="method" value="NMR"/>
    <property type="chains" value="A=263-378"/>
</dbReference>
<dbReference type="PDB" id="1UFX">
    <property type="method" value="NMR"/>
    <property type="chains" value="A=815-904"/>
</dbReference>
<dbReference type="PDB" id="6KZ1">
    <property type="method" value="X-ray"/>
    <property type="resolution" value="1.69 A"/>
    <property type="chains" value="A=814-907"/>
</dbReference>
<dbReference type="PDB" id="7EP7">
    <property type="method" value="X-ray"/>
    <property type="resolution" value="2.60 A"/>
    <property type="chains" value="B=717-746"/>
</dbReference>
<dbReference type="PDBsum" id="1UEZ"/>
<dbReference type="PDBsum" id="1UF1"/>
<dbReference type="PDBsum" id="1UFX"/>
<dbReference type="PDBsum" id="6KZ1"/>
<dbReference type="PDBsum" id="7EP7"/>
<dbReference type="BMRB" id="Q9P202"/>
<dbReference type="SMR" id="Q9P202"/>
<dbReference type="BioGRID" id="117381">
    <property type="interactions" value="23"/>
</dbReference>
<dbReference type="ComplexPortal" id="CPX-2821">
    <property type="entry name" value="USH2 complex"/>
</dbReference>
<dbReference type="CORUM" id="Q9P202"/>
<dbReference type="FunCoup" id="Q9P202">
    <property type="interactions" value="186"/>
</dbReference>
<dbReference type="IntAct" id="Q9P202">
    <property type="interactions" value="16"/>
</dbReference>
<dbReference type="MINT" id="Q9P202"/>
<dbReference type="STRING" id="9606.ENSP00000354623"/>
<dbReference type="GlyGen" id="Q9P202">
    <property type="glycosylation" value="2 sites, 1 O-linked glycan (1 site)"/>
</dbReference>
<dbReference type="iPTMnet" id="Q9P202"/>
<dbReference type="PhosphoSitePlus" id="Q9P202"/>
<dbReference type="SwissPalm" id="Q9P202"/>
<dbReference type="BioMuta" id="WHRN"/>
<dbReference type="DMDM" id="296453079"/>
<dbReference type="jPOST" id="Q9P202"/>
<dbReference type="MassIVE" id="Q9P202"/>
<dbReference type="PaxDb" id="9606-ENSP00000354623"/>
<dbReference type="PeptideAtlas" id="Q9P202"/>
<dbReference type="ProteomicsDB" id="83692">
    <molecule id="Q9P202-1"/>
</dbReference>
<dbReference type="ProteomicsDB" id="83693">
    <molecule id="Q9P202-2"/>
</dbReference>
<dbReference type="ProteomicsDB" id="83694">
    <molecule id="Q9P202-3"/>
</dbReference>
<dbReference type="ProteomicsDB" id="83695">
    <molecule id="Q9P202-4"/>
</dbReference>
<dbReference type="Antibodypedia" id="29951">
    <property type="antibodies" value="151 antibodies from 23 providers"/>
</dbReference>
<dbReference type="DNASU" id="25861"/>
<dbReference type="Ensembl" id="ENST00000265134.10">
    <molecule id="Q9P202-3"/>
    <property type="protein sequence ID" value="ENSP00000265134.6"/>
    <property type="gene ID" value="ENSG00000095397.18"/>
</dbReference>
<dbReference type="Ensembl" id="ENST00000362057.4">
    <molecule id="Q9P202-1"/>
    <property type="protein sequence ID" value="ENSP00000354623.3"/>
    <property type="gene ID" value="ENSG00000095397.18"/>
</dbReference>
<dbReference type="Ensembl" id="ENST00000374057.3">
    <molecule id="Q9P202-2"/>
    <property type="protein sequence ID" value="ENSP00000363170.3"/>
    <property type="gene ID" value="ENSG00000095397.18"/>
</dbReference>
<dbReference type="GeneID" id="25861"/>
<dbReference type="KEGG" id="hsa:25861"/>
<dbReference type="MANE-Select" id="ENST00000362057.4">
    <property type="protein sequence ID" value="ENSP00000354623.3"/>
    <property type="RefSeq nucleotide sequence ID" value="NM_015404.4"/>
    <property type="RefSeq protein sequence ID" value="NP_056219.3"/>
</dbReference>
<dbReference type="UCSC" id="uc004biy.5">
    <molecule id="Q9P202-1"/>
    <property type="organism name" value="human"/>
</dbReference>
<dbReference type="AGR" id="HGNC:16361"/>
<dbReference type="CTD" id="25861"/>
<dbReference type="DisGeNET" id="25861"/>
<dbReference type="GeneCards" id="WHRN"/>
<dbReference type="GeneReviews" id="WHRN"/>
<dbReference type="HGNC" id="HGNC:16361">
    <property type="gene designation" value="WHRN"/>
</dbReference>
<dbReference type="HPA" id="ENSG00000095397">
    <property type="expression patterns" value="Tissue enhanced (adrenal)"/>
</dbReference>
<dbReference type="MalaCards" id="WHRN"/>
<dbReference type="MIM" id="607084">
    <property type="type" value="phenotype"/>
</dbReference>
<dbReference type="MIM" id="607928">
    <property type="type" value="gene"/>
</dbReference>
<dbReference type="MIM" id="611383">
    <property type="type" value="phenotype"/>
</dbReference>
<dbReference type="neXtProt" id="NX_Q9P202"/>
<dbReference type="OpenTargets" id="ENSG00000095397"/>
<dbReference type="Orphanet" id="90636">
    <property type="disease" value="Rare autosomal recessive non-syndromic sensorineural deafness type DFNB"/>
</dbReference>
<dbReference type="Orphanet" id="231178">
    <property type="disease" value="Usher syndrome type 2"/>
</dbReference>
<dbReference type="PharmGKB" id="PA27297"/>
<dbReference type="VEuPathDB" id="HostDB:ENSG00000095397"/>
<dbReference type="eggNOG" id="KOG3528">
    <property type="taxonomic scope" value="Eukaryota"/>
</dbReference>
<dbReference type="GeneTree" id="ENSGT00950000183002"/>
<dbReference type="HOGENOM" id="CLU_069153_0_0_1"/>
<dbReference type="InParanoid" id="Q9P202"/>
<dbReference type="OMA" id="TMVNQTR"/>
<dbReference type="OrthoDB" id="10029564at2759"/>
<dbReference type="PAN-GO" id="Q9P202">
    <property type="GO annotations" value="7 GO annotations based on evolutionary models"/>
</dbReference>
<dbReference type="PhylomeDB" id="Q9P202"/>
<dbReference type="TreeFam" id="TF325033"/>
<dbReference type="PathwayCommons" id="Q9P202"/>
<dbReference type="Reactome" id="R-HSA-9662360">
    <property type="pathway name" value="Sensory processing of sound by inner hair cells of the cochlea"/>
</dbReference>
<dbReference type="Reactome" id="R-HSA-9662361">
    <property type="pathway name" value="Sensory processing of sound by outer hair cells of the cochlea"/>
</dbReference>
<dbReference type="SignaLink" id="Q9P202"/>
<dbReference type="BioGRID-ORCS" id="25861">
    <property type="hits" value="16 hits in 1158 CRISPR screens"/>
</dbReference>
<dbReference type="CD-CODE" id="FF4792F2">
    <property type="entry name" value="Row 1-specific tip complex condensates"/>
</dbReference>
<dbReference type="ChiTaRS" id="WHRN">
    <property type="organism name" value="human"/>
</dbReference>
<dbReference type="EvolutionaryTrace" id="Q9P202"/>
<dbReference type="GeneWiki" id="DFNB31"/>
<dbReference type="GenomeRNAi" id="25861"/>
<dbReference type="Pharos" id="Q9P202">
    <property type="development level" value="Tbio"/>
</dbReference>
<dbReference type="PRO" id="PR:Q9P202"/>
<dbReference type="Proteomes" id="UP000005640">
    <property type="component" value="Chromosome 9"/>
</dbReference>
<dbReference type="RNAct" id="Q9P202">
    <property type="molecule type" value="protein"/>
</dbReference>
<dbReference type="Bgee" id="ENSG00000095397">
    <property type="expression patterns" value="Expressed in right adrenal gland cortex and 155 other cell types or tissues"/>
</dbReference>
<dbReference type="ExpressionAtlas" id="Q9P202">
    <property type="expression patterns" value="baseline and differential"/>
</dbReference>
<dbReference type="GO" id="GO:0005884">
    <property type="term" value="C:actin filament"/>
    <property type="evidence" value="ECO:0007669"/>
    <property type="project" value="Ensembl"/>
</dbReference>
<dbReference type="GO" id="GO:0036064">
    <property type="term" value="C:ciliary basal body"/>
    <property type="evidence" value="ECO:0007669"/>
    <property type="project" value="Ensembl"/>
</dbReference>
<dbReference type="GO" id="GO:0005929">
    <property type="term" value="C:cilium"/>
    <property type="evidence" value="ECO:0000318"/>
    <property type="project" value="GO_Central"/>
</dbReference>
<dbReference type="GO" id="GO:0005737">
    <property type="term" value="C:cytoplasm"/>
    <property type="evidence" value="ECO:0000314"/>
    <property type="project" value="HGNC-UCL"/>
</dbReference>
<dbReference type="GO" id="GO:0030426">
    <property type="term" value="C:growth cone"/>
    <property type="evidence" value="ECO:0007669"/>
    <property type="project" value="UniProtKB-SubCell"/>
</dbReference>
<dbReference type="GO" id="GO:1990075">
    <property type="term" value="C:periciliary membrane compartment"/>
    <property type="evidence" value="ECO:0000250"/>
    <property type="project" value="UniProtKB"/>
</dbReference>
<dbReference type="GO" id="GO:0032391">
    <property type="term" value="C:photoreceptor connecting cilium"/>
    <property type="evidence" value="ECO:0007669"/>
    <property type="project" value="Ensembl"/>
</dbReference>
<dbReference type="GO" id="GO:0001917">
    <property type="term" value="C:photoreceptor inner segment"/>
    <property type="evidence" value="ECO:0007669"/>
    <property type="project" value="UniProtKB-SubCell"/>
</dbReference>
<dbReference type="GO" id="GO:0005886">
    <property type="term" value="C:plasma membrane"/>
    <property type="evidence" value="ECO:0000318"/>
    <property type="project" value="GO_Central"/>
</dbReference>
<dbReference type="GO" id="GO:0002141">
    <property type="term" value="C:stereocilia ankle link"/>
    <property type="evidence" value="ECO:0000250"/>
    <property type="project" value="UniProtKB"/>
</dbReference>
<dbReference type="GO" id="GO:0002142">
    <property type="term" value="C:stereocilia ankle link complex"/>
    <property type="evidence" value="ECO:0000250"/>
    <property type="project" value="UniProtKB"/>
</dbReference>
<dbReference type="GO" id="GO:0032420">
    <property type="term" value="C:stereocilium"/>
    <property type="evidence" value="ECO:0000250"/>
    <property type="project" value="UniProtKB"/>
</dbReference>
<dbReference type="GO" id="GO:0032426">
    <property type="term" value="C:stereocilium tip"/>
    <property type="evidence" value="ECO:0000250"/>
    <property type="project" value="UniProtKB"/>
</dbReference>
<dbReference type="GO" id="GO:0045202">
    <property type="term" value="C:synapse"/>
    <property type="evidence" value="ECO:0007669"/>
    <property type="project" value="UniProtKB-SubCell"/>
</dbReference>
<dbReference type="GO" id="GO:1990696">
    <property type="term" value="C:USH2 complex"/>
    <property type="evidence" value="ECO:0000250"/>
    <property type="project" value="UniProtKB"/>
</dbReference>
<dbReference type="GO" id="GO:0042802">
    <property type="term" value="F:identical protein binding"/>
    <property type="evidence" value="ECO:0007669"/>
    <property type="project" value="Ensembl"/>
</dbReference>
<dbReference type="GO" id="GO:0060088">
    <property type="term" value="P:auditory receptor cell stereocilium organization"/>
    <property type="evidence" value="ECO:0000318"/>
    <property type="project" value="GO_Central"/>
</dbReference>
<dbReference type="GO" id="GO:0021694">
    <property type="term" value="P:cerebellar Purkinje cell layer formation"/>
    <property type="evidence" value="ECO:0007669"/>
    <property type="project" value="Ensembl"/>
</dbReference>
<dbReference type="GO" id="GO:0050910">
    <property type="term" value="P:detection of mechanical stimulus involved in sensory perception of sound"/>
    <property type="evidence" value="ECO:0000250"/>
    <property type="project" value="UniProtKB"/>
</dbReference>
<dbReference type="GO" id="GO:0051649">
    <property type="term" value="P:establishment of localization in cell"/>
    <property type="evidence" value="ECO:0007669"/>
    <property type="project" value="Ensembl"/>
</dbReference>
<dbReference type="GO" id="GO:0045184">
    <property type="term" value="P:establishment of protein localization"/>
    <property type="evidence" value="ECO:0000250"/>
    <property type="project" value="UniProtKB"/>
</dbReference>
<dbReference type="GO" id="GO:0060113">
    <property type="term" value="P:inner ear receptor cell differentiation"/>
    <property type="evidence" value="ECO:0000303"/>
    <property type="project" value="ComplexPortal"/>
</dbReference>
<dbReference type="GO" id="GO:0060122">
    <property type="term" value="P:inner ear receptor cell stereocilium organization"/>
    <property type="evidence" value="ECO:0000250"/>
    <property type="project" value="UniProtKB"/>
</dbReference>
<dbReference type="GO" id="GO:1990227">
    <property type="term" value="P:paranodal junction maintenance"/>
    <property type="evidence" value="ECO:0007669"/>
    <property type="project" value="Ensembl"/>
</dbReference>
<dbReference type="GO" id="GO:0010628">
    <property type="term" value="P:positive regulation of gene expression"/>
    <property type="evidence" value="ECO:0007669"/>
    <property type="project" value="Ensembl"/>
</dbReference>
<dbReference type="GO" id="GO:0001895">
    <property type="term" value="P:retina homeostasis"/>
    <property type="evidence" value="ECO:0000315"/>
    <property type="project" value="HGNC-UCL"/>
</dbReference>
<dbReference type="GO" id="GO:0050953">
    <property type="term" value="P:sensory perception of light stimulus"/>
    <property type="evidence" value="ECO:0000315"/>
    <property type="project" value="HGNC-UCL"/>
</dbReference>
<dbReference type="GO" id="GO:0007605">
    <property type="term" value="P:sensory perception of sound"/>
    <property type="evidence" value="ECO:0000315"/>
    <property type="project" value="HGNC-UCL"/>
</dbReference>
<dbReference type="CDD" id="cd07356">
    <property type="entry name" value="HN_L-whirlin_R1_like"/>
    <property type="match status" value="1"/>
</dbReference>
<dbReference type="CDD" id="cd07357">
    <property type="entry name" value="HN_L-whirlin_R2_like"/>
    <property type="match status" value="1"/>
</dbReference>
<dbReference type="CDD" id="cd06740">
    <property type="entry name" value="PDZ1_FL-whirlin"/>
    <property type="match status" value="1"/>
</dbReference>
<dbReference type="CDD" id="cd06741">
    <property type="entry name" value="PDZ2_FL-whirlin"/>
    <property type="match status" value="1"/>
</dbReference>
<dbReference type="CDD" id="cd06742">
    <property type="entry name" value="PDZ3_FL-whirlin-like"/>
    <property type="match status" value="1"/>
</dbReference>
<dbReference type="FunFam" id="1.20.1160.20:FF:000002">
    <property type="entry name" value="Whirlin a"/>
    <property type="match status" value="1"/>
</dbReference>
<dbReference type="FunFam" id="1.20.1160.20:FF:000003">
    <property type="entry name" value="Whirlin a"/>
    <property type="match status" value="1"/>
</dbReference>
<dbReference type="FunFam" id="2.30.42.10:FF:000079">
    <property type="entry name" value="Whirlin a"/>
    <property type="match status" value="1"/>
</dbReference>
<dbReference type="FunFam" id="2.30.42.10:FF:000087">
    <property type="entry name" value="Whirlin a"/>
    <property type="match status" value="1"/>
</dbReference>
<dbReference type="FunFam" id="2.30.42.10:FF:000111">
    <property type="entry name" value="Whirlin a"/>
    <property type="match status" value="1"/>
</dbReference>
<dbReference type="Gene3D" id="1.20.1160.20">
    <property type="match status" value="2"/>
</dbReference>
<dbReference type="Gene3D" id="2.30.42.10">
    <property type="match status" value="3"/>
</dbReference>
<dbReference type="InterPro" id="IPR001478">
    <property type="entry name" value="PDZ"/>
</dbReference>
<dbReference type="InterPro" id="IPR036034">
    <property type="entry name" value="PDZ_sf"/>
</dbReference>
<dbReference type="InterPro" id="IPR051844">
    <property type="entry name" value="USH2_Complex_Protein"/>
</dbReference>
<dbReference type="InterPro" id="IPR047056">
    <property type="entry name" value="Whirlin_HN-like_dom1"/>
</dbReference>
<dbReference type="InterPro" id="IPR033028">
    <property type="entry name" value="Whirlin_HN-like_dom2"/>
</dbReference>
<dbReference type="PANTHER" id="PTHR23116">
    <property type="entry name" value="PDZ DOMAIN CONTAINING WHIRLIN AND HARMONIN-RELATED"/>
    <property type="match status" value="1"/>
</dbReference>
<dbReference type="PANTHER" id="PTHR23116:SF37">
    <property type="entry name" value="WHIRLIN"/>
    <property type="match status" value="1"/>
</dbReference>
<dbReference type="Pfam" id="PF00595">
    <property type="entry name" value="PDZ"/>
    <property type="match status" value="3"/>
</dbReference>
<dbReference type="SMART" id="SM00228">
    <property type="entry name" value="PDZ"/>
    <property type="match status" value="3"/>
</dbReference>
<dbReference type="SUPFAM" id="SSF50156">
    <property type="entry name" value="PDZ domain-like"/>
    <property type="match status" value="3"/>
</dbReference>
<dbReference type="PROSITE" id="PS50106">
    <property type="entry name" value="PDZ"/>
    <property type="match status" value="3"/>
</dbReference>
<accession>Q9P202</accession>
<accession>A0A0C4DFT9</accession>
<accession>A5PKU1</accession>
<accession>A5PKZ9</accession>
<accession>Q5TAU9</accession>
<accession>Q5TAV0</accession>
<accession>Q5TAV1</accession>
<accession>Q5TAV2</accession>
<accession>Q96MZ9</accession>
<accession>Q9H9F4</accession>
<accession>Q9UFZ3</accession>
<evidence type="ECO:0000250" key="1">
    <source>
        <dbReference type="UniProtKB" id="Q80VW5"/>
    </source>
</evidence>
<evidence type="ECO:0000250" key="2">
    <source>
        <dbReference type="UniProtKB" id="Q810W9"/>
    </source>
</evidence>
<evidence type="ECO:0000255" key="3">
    <source>
        <dbReference type="PROSITE-ProRule" id="PRU00143"/>
    </source>
</evidence>
<evidence type="ECO:0000256" key="4">
    <source>
        <dbReference type="SAM" id="MobiDB-lite"/>
    </source>
</evidence>
<evidence type="ECO:0000269" key="5">
    <source>
    </source>
</evidence>
<evidence type="ECO:0000269" key="6">
    <source>
    </source>
</evidence>
<evidence type="ECO:0000269" key="7">
    <source>
    </source>
</evidence>
<evidence type="ECO:0000269" key="8">
    <source>
    </source>
</evidence>
<evidence type="ECO:0000269" key="9">
    <source>
    </source>
</evidence>
<evidence type="ECO:0000269" key="10">
    <source>
    </source>
</evidence>
<evidence type="ECO:0000269" key="11">
    <source>
    </source>
</evidence>
<evidence type="ECO:0000269" key="12">
    <source>
    </source>
</evidence>
<evidence type="ECO:0000269" key="13">
    <source>
    </source>
</evidence>
<evidence type="ECO:0000303" key="14">
    <source>
    </source>
</evidence>
<evidence type="ECO:0000303" key="15">
    <source>
    </source>
</evidence>
<evidence type="ECO:0000303" key="16">
    <source>
    </source>
</evidence>
<evidence type="ECO:0000305" key="17"/>
<evidence type="ECO:0000312" key="18">
    <source>
        <dbReference type="HGNC" id="HGNC:16361"/>
    </source>
</evidence>
<evidence type="ECO:0007744" key="19">
    <source>
    </source>
</evidence>
<evidence type="ECO:0007829" key="20">
    <source>
        <dbReference type="PDB" id="1UEZ"/>
    </source>
</evidence>
<evidence type="ECO:0007829" key="21">
    <source>
        <dbReference type="PDB" id="1UF1"/>
    </source>
</evidence>
<evidence type="ECO:0007829" key="22">
    <source>
        <dbReference type="PDB" id="6KZ1"/>
    </source>
</evidence>
<protein>
    <recommendedName>
        <fullName evidence="17">Whirlin</fullName>
    </recommendedName>
    <alternativeName>
        <fullName evidence="17">Autosomal recessive deafness type 31 protein</fullName>
    </alternativeName>
</protein>
<organism>
    <name type="scientific">Homo sapiens</name>
    <name type="common">Human</name>
    <dbReference type="NCBI Taxonomy" id="9606"/>
    <lineage>
        <taxon>Eukaryota</taxon>
        <taxon>Metazoa</taxon>
        <taxon>Chordata</taxon>
        <taxon>Craniata</taxon>
        <taxon>Vertebrata</taxon>
        <taxon>Euteleostomi</taxon>
        <taxon>Mammalia</taxon>
        <taxon>Eutheria</taxon>
        <taxon>Euarchontoglires</taxon>
        <taxon>Primates</taxon>
        <taxon>Haplorrhini</taxon>
        <taxon>Catarrhini</taxon>
        <taxon>Hominidae</taxon>
        <taxon>Homo</taxon>
    </lineage>
</organism>
<feature type="chain" id="PRO_0000065968" description="Whirlin">
    <location>
        <begin position="1"/>
        <end position="907"/>
    </location>
</feature>
<feature type="domain" description="PDZ 1" evidence="3">
    <location>
        <begin position="140"/>
        <end position="223"/>
    </location>
</feature>
<feature type="domain" description="PDZ 2" evidence="3">
    <location>
        <begin position="279"/>
        <end position="361"/>
    </location>
</feature>
<feature type="domain" description="PDZ 3" evidence="3">
    <location>
        <begin position="816"/>
        <end position="899"/>
    </location>
</feature>
<feature type="region of interest" description="Disordered" evidence="4">
    <location>
        <begin position="243"/>
        <end position="264"/>
    </location>
</feature>
<feature type="region of interest" description="Disordered" evidence="4">
    <location>
        <begin position="502"/>
        <end position="540"/>
    </location>
</feature>
<feature type="region of interest" description="Disordered" evidence="4">
    <location>
        <begin position="565"/>
        <end position="663"/>
    </location>
</feature>
<feature type="region of interest" description="Disordered" evidence="4">
    <location>
        <begin position="684"/>
        <end position="717"/>
    </location>
</feature>
<feature type="region of interest" description="Disordered" evidence="4">
    <location>
        <begin position="742"/>
        <end position="815"/>
    </location>
</feature>
<feature type="compositionally biased region" description="Low complexity" evidence="4">
    <location>
        <begin position="521"/>
        <end position="540"/>
    </location>
</feature>
<feature type="compositionally biased region" description="Polar residues" evidence="4">
    <location>
        <begin position="609"/>
        <end position="626"/>
    </location>
</feature>
<feature type="compositionally biased region" description="Low complexity" evidence="4">
    <location>
        <begin position="628"/>
        <end position="642"/>
    </location>
</feature>
<feature type="compositionally biased region" description="Polar residues" evidence="4">
    <location>
        <begin position="743"/>
        <end position="762"/>
    </location>
</feature>
<feature type="compositionally biased region" description="Basic and acidic residues" evidence="4">
    <location>
        <begin position="789"/>
        <end position="800"/>
    </location>
</feature>
<feature type="modified residue" description="Phosphoserine" evidence="19">
    <location>
        <position position="685"/>
    </location>
</feature>
<feature type="splice variant" id="VSP_012216" description="In isoform 3." evidence="16">
    <location>
        <begin position="1"/>
        <end position="383"/>
    </location>
</feature>
<feature type="splice variant" id="VSP_012217" description="In isoform 4." evidence="15">
    <location>
        <begin position="1"/>
        <end position="351"/>
    </location>
</feature>
<feature type="splice variant" id="VSP_012218" description="In isoform 2." evidence="15">
    <original>NLVLGDGRSLGLTIRGGAEYGLGIYITGVDPGSEAEGSGLKVGDQILEVNGRSFLNILHDEAVRL</original>
    <variation>SGVGKGGQPLRHRILPPNPEQQSCLEAARRGWFCPGSVFPQVCTEGWCFFFAFLFDLCSVCYNTG</variation>
    <location>
        <begin position="281"/>
        <end position="345"/>
    </location>
</feature>
<feature type="splice variant" id="VSP_012219" description="In isoform 2." evidence="15">
    <location>
        <begin position="346"/>
        <end position="907"/>
    </location>
</feature>
<feature type="splice variant" id="VSP_012220" description="In isoform 4." evidence="15">
    <original>LILTVKDVGRLPHARTTVDETKWIASSRIRETMANSAG</original>
    <variation>MHGSLEALLFLPQVTLSLAHAHLICSNAQLEMCVFPHR</variation>
    <location>
        <begin position="352"/>
        <end position="389"/>
    </location>
</feature>
<feature type="sequence variant" id="VAR_036684" description="In dbSNP:rs10817610.">
    <original>H</original>
    <variation>R</variation>
    <location>
        <position position="364"/>
    </location>
</feature>
<feature type="sequence variant" id="VAR_036685" description="In dbSNP:rs35003670.">
    <original>R</original>
    <variation>P</variation>
    <location>
        <position position="423"/>
    </location>
</feature>
<feature type="sequence variant" id="VAR_020593" description="In dbSNP:rs4978584.">
    <original>A</original>
    <variation>T</variation>
    <location>
        <position position="440"/>
    </location>
</feature>
<feature type="sequence variant" id="VAR_057029" description="In dbSNP:rs11539662.">
    <original>A</original>
    <variation>S</variation>
    <location>
        <position position="443"/>
    </location>
</feature>
<feature type="sequence variant" id="VAR_036686" description="In dbSNP:rs12339210.">
    <original>P</original>
    <variation>A</variation>
    <location>
        <position position="562"/>
    </location>
</feature>
<feature type="sequence variant" id="VAR_036687" description="In dbSNP:rs942519." evidence="7 8">
    <original>M</original>
    <variation>T</variation>
    <location>
        <position position="613"/>
    </location>
</feature>
<feature type="sequence variant" id="VAR_036688" description="In dbSNP:rs6478078.">
    <original>Q</original>
    <variation>H</variation>
    <location>
        <position position="752"/>
    </location>
</feature>
<feature type="sequence variant" id="VAR_020594" description="In dbSNP:rs2274159." evidence="7 8">
    <original>V</original>
    <variation>A</variation>
    <location>
        <position position="783"/>
    </location>
</feature>
<feature type="sequence variant" id="VAR_020595" description="In dbSNP:rs2274158.">
    <original>N</original>
    <variation>K</variation>
    <location>
        <position position="796"/>
    </location>
</feature>
<feature type="sequence variant" id="VAR_020596" description="In dbSNP:rs143728180.">
    <original>T</original>
    <variation>M</variation>
    <location>
        <position position="813"/>
    </location>
</feature>
<feature type="sequence conflict" description="In Ref. 2; AK056190." evidence="17" ref="2">
    <original>P</original>
    <variation>S</variation>
    <location>
        <position position="225"/>
    </location>
</feature>
<feature type="sequence conflict" description="In Ref. 2; BAB14275." evidence="17" ref="2">
    <original>G</original>
    <variation>V</variation>
    <location>
        <position position="716"/>
    </location>
</feature>
<feature type="strand" evidence="20">
    <location>
        <begin position="139"/>
        <end position="141"/>
    </location>
</feature>
<feature type="strand" evidence="20">
    <location>
        <begin position="152"/>
        <end position="158"/>
    </location>
</feature>
<feature type="turn" evidence="20">
    <location>
        <begin position="160"/>
        <end position="163"/>
    </location>
</feature>
<feature type="strand" evidence="20">
    <location>
        <begin position="166"/>
        <end position="171"/>
    </location>
</feature>
<feature type="helix" evidence="20">
    <location>
        <begin position="176"/>
        <end position="180"/>
    </location>
</feature>
<feature type="strand" evidence="20">
    <location>
        <begin position="188"/>
        <end position="191"/>
    </location>
</feature>
<feature type="helix" evidence="20">
    <location>
        <begin position="201"/>
        <end position="207"/>
    </location>
</feature>
<feature type="strand" evidence="20">
    <location>
        <begin position="208"/>
        <end position="213"/>
    </location>
</feature>
<feature type="strand" evidence="20">
    <location>
        <begin position="216"/>
        <end position="218"/>
    </location>
</feature>
<feature type="turn" evidence="21">
    <location>
        <begin position="263"/>
        <end position="265"/>
    </location>
</feature>
<feature type="strand" evidence="21">
    <location>
        <begin position="275"/>
        <end position="283"/>
    </location>
</feature>
<feature type="strand" evidence="21">
    <location>
        <begin position="292"/>
        <end position="295"/>
    </location>
</feature>
<feature type="turn" evidence="21">
    <location>
        <begin position="298"/>
        <end position="301"/>
    </location>
</feature>
<feature type="strand" evidence="21">
    <location>
        <begin position="305"/>
        <end position="309"/>
    </location>
</feature>
<feature type="helix" evidence="21">
    <location>
        <begin position="314"/>
        <end position="318"/>
    </location>
</feature>
<feature type="strand" evidence="21">
    <location>
        <begin position="325"/>
        <end position="329"/>
    </location>
</feature>
<feature type="helix" evidence="21">
    <location>
        <begin position="339"/>
        <end position="346"/>
    </location>
</feature>
<feature type="strand" evidence="21">
    <location>
        <begin position="350"/>
        <end position="357"/>
    </location>
</feature>
<feature type="strand" evidence="22">
    <location>
        <begin position="814"/>
        <end position="820"/>
    </location>
</feature>
<feature type="strand" evidence="22">
    <location>
        <begin position="823"/>
        <end position="825"/>
    </location>
</feature>
<feature type="strand" evidence="22">
    <location>
        <begin position="828"/>
        <end position="831"/>
    </location>
</feature>
<feature type="strand" evidence="22">
    <location>
        <begin position="836"/>
        <end position="838"/>
    </location>
</feature>
<feature type="strand" evidence="22">
    <location>
        <begin position="842"/>
        <end position="846"/>
    </location>
</feature>
<feature type="helix" evidence="22">
    <location>
        <begin position="851"/>
        <end position="855"/>
    </location>
</feature>
<feature type="strand" evidence="22">
    <location>
        <begin position="863"/>
        <end position="867"/>
    </location>
</feature>
<feature type="helix" evidence="22">
    <location>
        <begin position="877"/>
        <end position="889"/>
    </location>
</feature>
<feature type="strand" evidence="22">
    <location>
        <begin position="894"/>
        <end position="903"/>
    </location>
</feature>
<name>WHRN_HUMAN</name>
<proteinExistence type="evidence at protein level"/>